<dbReference type="EC" id="6.3.3.3" evidence="1"/>
<dbReference type="EMBL" id="CP000381">
    <property type="protein sequence ID" value="ABX72888.1"/>
    <property type="molecule type" value="Genomic_DNA"/>
</dbReference>
<dbReference type="RefSeq" id="WP_012221441.1">
    <property type="nucleotide sequence ID" value="NC_010120.1"/>
</dbReference>
<dbReference type="SMR" id="A9M388"/>
<dbReference type="KEGG" id="nmn:NMCC_0693"/>
<dbReference type="HOGENOM" id="CLU_072551_3_0_4"/>
<dbReference type="UniPathway" id="UPA00078">
    <property type="reaction ID" value="UER00161"/>
</dbReference>
<dbReference type="Proteomes" id="UP000001177">
    <property type="component" value="Chromosome"/>
</dbReference>
<dbReference type="GO" id="GO:0005829">
    <property type="term" value="C:cytosol"/>
    <property type="evidence" value="ECO:0007669"/>
    <property type="project" value="TreeGrafter"/>
</dbReference>
<dbReference type="GO" id="GO:0005524">
    <property type="term" value="F:ATP binding"/>
    <property type="evidence" value="ECO:0007669"/>
    <property type="project" value="UniProtKB-UniRule"/>
</dbReference>
<dbReference type="GO" id="GO:0004141">
    <property type="term" value="F:dethiobiotin synthase activity"/>
    <property type="evidence" value="ECO:0007669"/>
    <property type="project" value="UniProtKB-UniRule"/>
</dbReference>
<dbReference type="GO" id="GO:0000287">
    <property type="term" value="F:magnesium ion binding"/>
    <property type="evidence" value="ECO:0007669"/>
    <property type="project" value="UniProtKB-UniRule"/>
</dbReference>
<dbReference type="GO" id="GO:0009102">
    <property type="term" value="P:biotin biosynthetic process"/>
    <property type="evidence" value="ECO:0007669"/>
    <property type="project" value="UniProtKB-UniRule"/>
</dbReference>
<dbReference type="CDD" id="cd03109">
    <property type="entry name" value="DTBS"/>
    <property type="match status" value="1"/>
</dbReference>
<dbReference type="FunFam" id="3.40.50.300:FF:000292">
    <property type="entry name" value="ATP-dependent dethiobiotin synthetase BioD"/>
    <property type="match status" value="1"/>
</dbReference>
<dbReference type="Gene3D" id="3.40.50.300">
    <property type="entry name" value="P-loop containing nucleotide triphosphate hydrolases"/>
    <property type="match status" value="1"/>
</dbReference>
<dbReference type="HAMAP" id="MF_00336">
    <property type="entry name" value="BioD"/>
    <property type="match status" value="1"/>
</dbReference>
<dbReference type="InterPro" id="IPR004472">
    <property type="entry name" value="DTB_synth_BioD"/>
</dbReference>
<dbReference type="InterPro" id="IPR027417">
    <property type="entry name" value="P-loop_NTPase"/>
</dbReference>
<dbReference type="NCBIfam" id="TIGR00347">
    <property type="entry name" value="bioD"/>
    <property type="match status" value="1"/>
</dbReference>
<dbReference type="PANTHER" id="PTHR43210:SF2">
    <property type="entry name" value="ATP-DEPENDENT DETHIOBIOTIN SYNTHETASE BIOD 2"/>
    <property type="match status" value="1"/>
</dbReference>
<dbReference type="PANTHER" id="PTHR43210">
    <property type="entry name" value="DETHIOBIOTIN SYNTHETASE"/>
    <property type="match status" value="1"/>
</dbReference>
<dbReference type="Pfam" id="PF13500">
    <property type="entry name" value="AAA_26"/>
    <property type="match status" value="1"/>
</dbReference>
<dbReference type="PIRSF" id="PIRSF006755">
    <property type="entry name" value="DTB_synth"/>
    <property type="match status" value="1"/>
</dbReference>
<dbReference type="SUPFAM" id="SSF52540">
    <property type="entry name" value="P-loop containing nucleoside triphosphate hydrolases"/>
    <property type="match status" value="1"/>
</dbReference>
<proteinExistence type="inferred from homology"/>
<gene>
    <name evidence="1" type="primary">bioD</name>
    <name type="ordered locus">NMCC_0693</name>
</gene>
<organism>
    <name type="scientific">Neisseria meningitidis serogroup C (strain 053442)</name>
    <dbReference type="NCBI Taxonomy" id="374833"/>
    <lineage>
        <taxon>Bacteria</taxon>
        <taxon>Pseudomonadati</taxon>
        <taxon>Pseudomonadota</taxon>
        <taxon>Betaproteobacteria</taxon>
        <taxon>Neisseriales</taxon>
        <taxon>Neisseriaceae</taxon>
        <taxon>Neisseria</taxon>
    </lineage>
</organism>
<sequence>MKGVYFVSGIDTDIGKTVATGVLAKQLLQQGKSVITQKPVQTGCQNIADDIAVHRKIMGKPMQEADKQGLTMPEIFSYPASPHLAARLDGRALDLDKIRTATQQLAAQYEIVLVEGAGGLMVPLTENLLTIDYIRQQGYPVILVTSGRLGSINHTLLSFAALKQYGIRLHSLVFNHIHDSRDAHIAQDSLNYLKCRLKADFSEAEWMELAKTDAV</sequence>
<keyword id="KW-0067">ATP-binding</keyword>
<keyword id="KW-0093">Biotin biosynthesis</keyword>
<keyword id="KW-0963">Cytoplasm</keyword>
<keyword id="KW-0436">Ligase</keyword>
<keyword id="KW-0460">Magnesium</keyword>
<keyword id="KW-0479">Metal-binding</keyword>
<keyword id="KW-0547">Nucleotide-binding</keyword>
<protein>
    <recommendedName>
        <fullName evidence="1">ATP-dependent dethiobiotin synthetase BioD</fullName>
        <ecNumber evidence="1">6.3.3.3</ecNumber>
    </recommendedName>
    <alternativeName>
        <fullName evidence="1">DTB synthetase</fullName>
        <shortName evidence="1">DTBS</shortName>
    </alternativeName>
    <alternativeName>
        <fullName evidence="1">Dethiobiotin synthase</fullName>
    </alternativeName>
</protein>
<feature type="chain" id="PRO_1000079277" description="ATP-dependent dethiobiotin synthetase BioD">
    <location>
        <begin position="1"/>
        <end position="215"/>
    </location>
</feature>
<feature type="active site" evidence="1">
    <location>
        <position position="38"/>
    </location>
</feature>
<feature type="binding site" evidence="1">
    <location>
        <begin position="13"/>
        <end position="18"/>
    </location>
    <ligand>
        <name>ATP</name>
        <dbReference type="ChEBI" id="CHEBI:30616"/>
    </ligand>
</feature>
<feature type="binding site" evidence="1">
    <location>
        <position position="17"/>
    </location>
    <ligand>
        <name>Mg(2+)</name>
        <dbReference type="ChEBI" id="CHEBI:18420"/>
    </ligand>
</feature>
<feature type="binding site" evidence="1">
    <location>
        <position position="42"/>
    </location>
    <ligand>
        <name>substrate</name>
    </ligand>
</feature>
<feature type="binding site" evidence="1">
    <location>
        <position position="50"/>
    </location>
    <ligand>
        <name>ATP</name>
        <dbReference type="ChEBI" id="CHEBI:30616"/>
    </ligand>
</feature>
<feature type="binding site" evidence="1">
    <location>
        <position position="50"/>
    </location>
    <ligand>
        <name>Mg(2+)</name>
        <dbReference type="ChEBI" id="CHEBI:18420"/>
    </ligand>
</feature>
<feature type="binding site" evidence="1">
    <location>
        <begin position="115"/>
        <end position="118"/>
    </location>
    <ligand>
        <name>ATP</name>
        <dbReference type="ChEBI" id="CHEBI:30616"/>
    </ligand>
</feature>
<feature type="binding site" evidence="1">
    <location>
        <position position="115"/>
    </location>
    <ligand>
        <name>Mg(2+)</name>
        <dbReference type="ChEBI" id="CHEBI:18420"/>
    </ligand>
</feature>
<feature type="binding site" evidence="1">
    <location>
        <begin position="175"/>
        <end position="176"/>
    </location>
    <ligand>
        <name>ATP</name>
        <dbReference type="ChEBI" id="CHEBI:30616"/>
    </ligand>
</feature>
<evidence type="ECO:0000255" key="1">
    <source>
        <dbReference type="HAMAP-Rule" id="MF_00336"/>
    </source>
</evidence>
<reference key="1">
    <citation type="journal article" date="2008" name="Genomics">
        <title>Characterization of ST-4821 complex, a unique Neisseria meningitidis clone.</title>
        <authorList>
            <person name="Peng J."/>
            <person name="Yang L."/>
            <person name="Yang F."/>
            <person name="Yang J."/>
            <person name="Yan Y."/>
            <person name="Nie H."/>
            <person name="Zhang X."/>
            <person name="Xiong Z."/>
            <person name="Jiang Y."/>
            <person name="Cheng F."/>
            <person name="Xu X."/>
            <person name="Chen S."/>
            <person name="Sun L."/>
            <person name="Li W."/>
            <person name="Shen Y."/>
            <person name="Shao Z."/>
            <person name="Liang X."/>
            <person name="Xu J."/>
            <person name="Jin Q."/>
        </authorList>
    </citation>
    <scope>NUCLEOTIDE SEQUENCE [LARGE SCALE GENOMIC DNA]</scope>
    <source>
        <strain>053442</strain>
    </source>
</reference>
<comment type="function">
    <text evidence="1">Catalyzes a mechanistically unusual reaction, the ATP-dependent insertion of CO2 between the N7 and N8 nitrogen atoms of 7,8-diaminopelargonic acid (DAPA, also called 7,8-diammoniononanoate) to form a ureido ring.</text>
</comment>
<comment type="catalytic activity">
    <reaction evidence="1">
        <text>(7R,8S)-7,8-diammoniononanoate + CO2 + ATP = (4R,5S)-dethiobiotin + ADP + phosphate + 3 H(+)</text>
        <dbReference type="Rhea" id="RHEA:15805"/>
        <dbReference type="ChEBI" id="CHEBI:15378"/>
        <dbReference type="ChEBI" id="CHEBI:16526"/>
        <dbReference type="ChEBI" id="CHEBI:30616"/>
        <dbReference type="ChEBI" id="CHEBI:43474"/>
        <dbReference type="ChEBI" id="CHEBI:149469"/>
        <dbReference type="ChEBI" id="CHEBI:149473"/>
        <dbReference type="ChEBI" id="CHEBI:456216"/>
        <dbReference type="EC" id="6.3.3.3"/>
    </reaction>
</comment>
<comment type="cofactor">
    <cofactor evidence="1">
        <name>Mg(2+)</name>
        <dbReference type="ChEBI" id="CHEBI:18420"/>
    </cofactor>
</comment>
<comment type="pathway">
    <text evidence="1">Cofactor biosynthesis; biotin biosynthesis; biotin from 7,8-diaminononanoate: step 1/2.</text>
</comment>
<comment type="subunit">
    <text evidence="1">Homodimer.</text>
</comment>
<comment type="subcellular location">
    <subcellularLocation>
        <location evidence="1">Cytoplasm</location>
    </subcellularLocation>
</comment>
<comment type="similarity">
    <text evidence="1">Belongs to the dethiobiotin synthetase family.</text>
</comment>
<name>BIOD_NEIM0</name>
<accession>A9M388</accession>